<comment type="function">
    <text evidence="2">Oxidizes L-gulono-1,4-lactone to L-xylo-hexulonolactone which spontaneously isomerizes to L-ascorbate. Can use both cytochrome c and phenazine methosulfate as exogenous electron acceptors, but molecular oxygen does not serve as a substrate. Is very specific for the L-gulono-1,4-lactone substrate, since it cannot oxidize L-galactono-1,4-lactone, D-glucurono-3,6-lactone, D-glucuronate, D-arabinose, or D-xylose.</text>
</comment>
<comment type="catalytic activity">
    <reaction evidence="2">
        <text>L-gulono-1,4-lactone + 2 Fe(III)-[cytochrome c] = L-ascorbate + 2 Fe(II)-[cytochrome c] + 3 H(+)</text>
        <dbReference type="Rhea" id="RHEA:47248"/>
        <dbReference type="Rhea" id="RHEA-COMP:10350"/>
        <dbReference type="Rhea" id="RHEA-COMP:14399"/>
        <dbReference type="ChEBI" id="CHEBI:15378"/>
        <dbReference type="ChEBI" id="CHEBI:17587"/>
        <dbReference type="ChEBI" id="CHEBI:29033"/>
        <dbReference type="ChEBI" id="CHEBI:29034"/>
        <dbReference type="ChEBI" id="CHEBI:38290"/>
    </reaction>
</comment>
<comment type="cofactor">
    <cofactor evidence="4">
        <name>a divalent metal cation</name>
        <dbReference type="ChEBI" id="CHEBI:60240"/>
    </cofactor>
    <text evidence="4">Divalent metal cation.</text>
</comment>
<comment type="activity regulation">
    <text evidence="2">Is completely inhibited by EDTA, N-ethylmaleimide, Cu(2+), Zn(2+), and potassium cyanide in vitro. Mg(2+) and Ca(2+) have no effect on the dehydrogenase activity, and 1 mm Mn(2+) slightly inhibit the enzyme (21% inhibition).</text>
</comment>
<comment type="biophysicochemical properties">
    <kinetics>
        <KM evidence="2">5.5 mM for L-gulono-1,4-lactone</KM>
        <KM evidence="2">4.7 uM for ferricytochrome c</KM>
        <Vmax evidence="2">2.44 umol/h/mg enzyme</Vmax>
    </kinetics>
    <phDependence>
        <text evidence="2">Optimum pH is 8.0.</text>
    </phDependence>
    <temperatureDependence>
        <text evidence="2">Optimum temperature is 39 degrees Celsius. Is relatively thermostable since preincubation at 60 degrees Celsius for 5 minutes results in only partial inactivation of the enzyme (53% of control).</text>
    </temperatureDependence>
</comment>
<comment type="pathway">
    <text evidence="2">Cofactor biosynthesis; L-ascorbate biosynthesis.</text>
</comment>
<comment type="similarity">
    <text evidence="3">Belongs to the oxygen-dependent FAD-linked oxidoreductase family.</text>
</comment>
<comment type="caution">
    <text evidence="3">In contrast to mammalian L-gulono-1,4-lactone oxidases, the ortholog in M.tuberculosis is not a flavoenzyme.</text>
</comment>
<dbReference type="EC" id="1.1.2.-"/>
<dbReference type="EMBL" id="AL123456">
    <property type="protein sequence ID" value="CCP44538.1"/>
    <property type="molecule type" value="Genomic_DNA"/>
</dbReference>
<dbReference type="PIR" id="D70989">
    <property type="entry name" value="D70989"/>
</dbReference>
<dbReference type="RefSeq" id="NP_216287.1">
    <property type="nucleotide sequence ID" value="NC_000962.3"/>
</dbReference>
<dbReference type="RefSeq" id="WP_003408749.1">
    <property type="nucleotide sequence ID" value="NZ_NVQJ01000037.1"/>
</dbReference>
<dbReference type="SMR" id="P9WIT3"/>
<dbReference type="FunCoup" id="P9WIT3">
    <property type="interactions" value="306"/>
</dbReference>
<dbReference type="STRING" id="83332.Rv1771"/>
<dbReference type="PaxDb" id="83332-Rv1771"/>
<dbReference type="DNASU" id="885441"/>
<dbReference type="GeneID" id="885441"/>
<dbReference type="KEGG" id="mtu:Rv1771"/>
<dbReference type="PATRIC" id="fig|83332.12.peg.1978"/>
<dbReference type="TubercuList" id="Rv1771"/>
<dbReference type="eggNOG" id="COG0277">
    <property type="taxonomic scope" value="Bacteria"/>
</dbReference>
<dbReference type="InParanoid" id="P9WIT3"/>
<dbReference type="OrthoDB" id="9800184at2"/>
<dbReference type="PhylomeDB" id="P9WIT3"/>
<dbReference type="BioCyc" id="MetaCyc:G185E-5967-MONOMER"/>
<dbReference type="UniPathway" id="UPA00132"/>
<dbReference type="Proteomes" id="UP000001584">
    <property type="component" value="Chromosome"/>
</dbReference>
<dbReference type="GO" id="GO:0009274">
    <property type="term" value="C:peptidoglycan-based cell wall"/>
    <property type="evidence" value="ECO:0007005"/>
    <property type="project" value="MTBBASE"/>
</dbReference>
<dbReference type="GO" id="GO:0005886">
    <property type="term" value="C:plasma membrane"/>
    <property type="evidence" value="ECO:0007005"/>
    <property type="project" value="MTBBASE"/>
</dbReference>
<dbReference type="GO" id="GO:0003885">
    <property type="term" value="F:D-arabinono-1,4-lactone oxidase activity"/>
    <property type="evidence" value="ECO:0007669"/>
    <property type="project" value="InterPro"/>
</dbReference>
<dbReference type="GO" id="GO:0071949">
    <property type="term" value="F:FAD binding"/>
    <property type="evidence" value="ECO:0007669"/>
    <property type="project" value="InterPro"/>
</dbReference>
<dbReference type="GO" id="GO:0080049">
    <property type="term" value="F:L-gulono-1,4-lactone dehydrogenase activity"/>
    <property type="evidence" value="ECO:0000314"/>
    <property type="project" value="MTBBASE"/>
</dbReference>
<dbReference type="GO" id="GO:0019853">
    <property type="term" value="P:L-ascorbic acid biosynthetic process"/>
    <property type="evidence" value="ECO:0000314"/>
    <property type="project" value="MTBBASE"/>
</dbReference>
<dbReference type="Gene3D" id="3.30.465.10">
    <property type="match status" value="1"/>
</dbReference>
<dbReference type="Gene3D" id="3.30.70.2520">
    <property type="match status" value="1"/>
</dbReference>
<dbReference type="Gene3D" id="3.30.43.10">
    <property type="entry name" value="Uridine Diphospho-n-acetylenolpyruvylglucosamine Reductase, domain 2"/>
    <property type="match status" value="1"/>
</dbReference>
<dbReference type="Gene3D" id="1.10.45.10">
    <property type="entry name" value="Vanillyl-alcohol Oxidase, Chain A, domain 4"/>
    <property type="match status" value="1"/>
</dbReference>
<dbReference type="InterPro" id="IPR007173">
    <property type="entry name" value="ALO_C"/>
</dbReference>
<dbReference type="InterPro" id="IPR016166">
    <property type="entry name" value="FAD-bd_PCMH"/>
</dbReference>
<dbReference type="InterPro" id="IPR036318">
    <property type="entry name" value="FAD-bd_PCMH-like_sf"/>
</dbReference>
<dbReference type="InterPro" id="IPR016167">
    <property type="entry name" value="FAD-bd_PCMH_sub1"/>
</dbReference>
<dbReference type="InterPro" id="IPR016169">
    <property type="entry name" value="FAD-bd_PCMH_sub2"/>
</dbReference>
<dbReference type="InterPro" id="IPR010031">
    <property type="entry name" value="FAD_lactone_oxidase-like"/>
</dbReference>
<dbReference type="InterPro" id="IPR006094">
    <property type="entry name" value="Oxid_FAD_bind_N"/>
</dbReference>
<dbReference type="InterPro" id="IPR006093">
    <property type="entry name" value="Oxy_OxRdtase_FAD_BS"/>
</dbReference>
<dbReference type="InterPro" id="IPR016171">
    <property type="entry name" value="Vanillyl_alc_oxidase_C-sub2"/>
</dbReference>
<dbReference type="NCBIfam" id="TIGR01679">
    <property type="entry name" value="bact_FAD_ox"/>
    <property type="match status" value="1"/>
</dbReference>
<dbReference type="PANTHER" id="PTHR43762:SF1">
    <property type="entry name" value="D-ARABINONO-1,4-LACTONE OXIDASE"/>
    <property type="match status" value="1"/>
</dbReference>
<dbReference type="PANTHER" id="PTHR43762">
    <property type="entry name" value="L-GULONOLACTONE OXIDASE"/>
    <property type="match status" value="1"/>
</dbReference>
<dbReference type="Pfam" id="PF04030">
    <property type="entry name" value="ALO"/>
    <property type="match status" value="1"/>
</dbReference>
<dbReference type="Pfam" id="PF01565">
    <property type="entry name" value="FAD_binding_4"/>
    <property type="match status" value="1"/>
</dbReference>
<dbReference type="PIRSF" id="PIRSF000136">
    <property type="entry name" value="LGO_GLO"/>
    <property type="match status" value="1"/>
</dbReference>
<dbReference type="SUPFAM" id="SSF56176">
    <property type="entry name" value="FAD-binding/transporter-associated domain-like"/>
    <property type="match status" value="1"/>
</dbReference>
<dbReference type="PROSITE" id="PS51387">
    <property type="entry name" value="FAD_PCMH"/>
    <property type="match status" value="1"/>
</dbReference>
<dbReference type="PROSITE" id="PS00862">
    <property type="entry name" value="OX2_COVAL_FAD"/>
    <property type="match status" value="1"/>
</dbReference>
<gene>
    <name type="ordered locus">Rv1771</name>
</gene>
<proteinExistence type="evidence at protein level"/>
<protein>
    <recommendedName>
        <fullName>L-gulono-1,4-lactone dehydrogenase</fullName>
        <ecNumber>1.1.2.-</ecNumber>
    </recommendedName>
</protein>
<accession>P9WIT3</accession>
<accession>F2GJF7</accession>
<accession>L0TAK3</accession>
<accession>O06804</accession>
<accession>Q7D7Z8</accession>
<name>GULDH_MYCTU</name>
<sequence length="428" mass="48045">MSPIWSNWPGEQVCAPSAIVRPTSEAELADVIAQAAKRGERVRAVGSGHSFTDIACTDGVMIDMTGLQRVLDVDQPTGLVTVEGGAKLRALGPQLAQRRLGLENQGDVDPQSITGATATATHGTGVRFQNLSARIVSLRLVTAGGEVLSLSEGDDYLAARVSLGALGVISQVTLQTVPLFTLHRHDQRRSLAQTLERLDEFVDGNDHFEFFVFPYADKALTRTMHRSDEQPKPTPGWQRMVGENFENGGLSLICQTGRRFPSVAPRLNRLMTNMMSSSTVQDRAYKVFATQRKVRFTEMEYAIPRENGREALQRVIDLVRRRSLPIMFPIEVRFSAPDDSFLSTAYGRDTCYIAVHQYAGMEFESYFRAVEEIMDDYAGRPHWGKRHYQTAATLRERYPQWDRFAAVRDRLDPDRVFLNDYTRRVLGP</sequence>
<feature type="chain" id="PRO_0000420410" description="L-gulono-1,4-lactone dehydrogenase">
    <location>
        <begin position="1"/>
        <end position="428"/>
    </location>
</feature>
<feature type="domain" description="FAD-binding PCMH-type" evidence="1">
    <location>
        <begin position="12"/>
        <end position="179"/>
    </location>
</feature>
<reference key="1">
    <citation type="journal article" date="1998" name="Nature">
        <title>Deciphering the biology of Mycobacterium tuberculosis from the complete genome sequence.</title>
        <authorList>
            <person name="Cole S.T."/>
            <person name="Brosch R."/>
            <person name="Parkhill J."/>
            <person name="Garnier T."/>
            <person name="Churcher C.M."/>
            <person name="Harris D.E."/>
            <person name="Gordon S.V."/>
            <person name="Eiglmeier K."/>
            <person name="Gas S."/>
            <person name="Barry C.E. III"/>
            <person name="Tekaia F."/>
            <person name="Badcock K."/>
            <person name="Basham D."/>
            <person name="Brown D."/>
            <person name="Chillingworth T."/>
            <person name="Connor R."/>
            <person name="Davies R.M."/>
            <person name="Devlin K."/>
            <person name="Feltwell T."/>
            <person name="Gentles S."/>
            <person name="Hamlin N."/>
            <person name="Holroyd S."/>
            <person name="Hornsby T."/>
            <person name="Jagels K."/>
            <person name="Krogh A."/>
            <person name="McLean J."/>
            <person name="Moule S."/>
            <person name="Murphy L.D."/>
            <person name="Oliver S."/>
            <person name="Osborne J."/>
            <person name="Quail M.A."/>
            <person name="Rajandream M.A."/>
            <person name="Rogers J."/>
            <person name="Rutter S."/>
            <person name="Seeger K."/>
            <person name="Skelton S."/>
            <person name="Squares S."/>
            <person name="Squares R."/>
            <person name="Sulston J.E."/>
            <person name="Taylor K."/>
            <person name="Whitehead S."/>
            <person name="Barrell B.G."/>
        </authorList>
    </citation>
    <scope>NUCLEOTIDE SEQUENCE [LARGE SCALE GENOMIC DNA]</scope>
    <source>
        <strain>ATCC 25618 / H37Rv</strain>
    </source>
</reference>
<reference key="2">
    <citation type="journal article" date="2006" name="FEBS J.">
        <title>Mycobacterium tuberculosis possesses a functional enzyme for the synthesis of vitamin C, L-gulono-1,4-lactone dehydrogenase.</title>
        <authorList>
            <person name="Wolucka B.A."/>
            <person name="Communi D."/>
        </authorList>
    </citation>
    <scope>FUNCTION</scope>
    <scope>CATALYTIC ACTIVITY</scope>
    <scope>SUBSTRATE SPECIFICITY</scope>
    <scope>COFACTOR</scope>
    <scope>ABSENCE OF FAD-BINDING</scope>
    <scope>BIOPHYSICOCHEMICAL PROPERTIES</scope>
    <scope>ACTIVITY REGULATION</scope>
    <scope>PATHWAY</scope>
    <source>
        <strain>ATCC 25618 / H37Rv</strain>
    </source>
</reference>
<reference key="3">
    <citation type="journal article" date="2011" name="Mol. Cell. Proteomics">
        <title>Proteogenomic analysis of Mycobacterium tuberculosis by high resolution mass spectrometry.</title>
        <authorList>
            <person name="Kelkar D.S."/>
            <person name="Kumar D."/>
            <person name="Kumar P."/>
            <person name="Balakrishnan L."/>
            <person name="Muthusamy B."/>
            <person name="Yadav A.K."/>
            <person name="Shrivastava P."/>
            <person name="Marimuthu A."/>
            <person name="Anand S."/>
            <person name="Sundaram H."/>
            <person name="Kingsbury R."/>
            <person name="Harsha H.C."/>
            <person name="Nair B."/>
            <person name="Prasad T.S."/>
            <person name="Chauhan D.S."/>
            <person name="Katoch K."/>
            <person name="Katoch V.M."/>
            <person name="Kumar P."/>
            <person name="Chaerkady R."/>
            <person name="Ramachandran S."/>
            <person name="Dash D."/>
            <person name="Pandey A."/>
        </authorList>
    </citation>
    <scope>IDENTIFICATION BY MASS SPECTROMETRY [LARGE SCALE ANALYSIS]</scope>
    <source>
        <strain>ATCC 25618 / H37Rv</strain>
    </source>
</reference>
<keyword id="KW-0060">Ascorbate biosynthesis</keyword>
<keyword id="KW-0560">Oxidoreductase</keyword>
<keyword id="KW-1185">Reference proteome</keyword>
<evidence type="ECO:0000255" key="1">
    <source>
        <dbReference type="PROSITE-ProRule" id="PRU00718"/>
    </source>
</evidence>
<evidence type="ECO:0000269" key="2">
    <source>
    </source>
</evidence>
<evidence type="ECO:0000305" key="3"/>
<evidence type="ECO:0000305" key="4">
    <source>
    </source>
</evidence>
<organism>
    <name type="scientific">Mycobacterium tuberculosis (strain ATCC 25618 / H37Rv)</name>
    <dbReference type="NCBI Taxonomy" id="83332"/>
    <lineage>
        <taxon>Bacteria</taxon>
        <taxon>Bacillati</taxon>
        <taxon>Actinomycetota</taxon>
        <taxon>Actinomycetes</taxon>
        <taxon>Mycobacteriales</taxon>
        <taxon>Mycobacteriaceae</taxon>
        <taxon>Mycobacterium</taxon>
        <taxon>Mycobacterium tuberculosis complex</taxon>
    </lineage>
</organism>